<accession>Q38VN3</accession>
<sequence>MRMEKIDENTIRVLLENDDLEERGITGLDLLSNHKKIERFFYSILEEVDQDHVFANNDAVTFQVLPNEQGLELLISKNLSNLDLNKAQSEMVQGKDGITEYIKDQLLKRDTASSEDDEEDDEIESYLNQADNPTKQVVLGFDTFEDWIALAQQLHIESGVSNLFVYKHQYYAQLVFFLENTTETFVQDDLAVANEFGHKTNYTADFLSEYGQRVMENSALELTRYYFKD</sequence>
<comment type="function">
    <text evidence="1">Enables the recognition and targeting of unfolded and aggregated proteins to the ClpC protease or to other proteins involved in proteolysis.</text>
</comment>
<comment type="subunit">
    <text evidence="1">Homodimer.</text>
</comment>
<comment type="domain">
    <text>The N-terminal domain probably binds unfolded/aggregated proteins; the C-terminal domain interacts with ClpC.</text>
</comment>
<comment type="similarity">
    <text evidence="1">Belongs to the MecA family.</text>
</comment>
<evidence type="ECO:0000255" key="1">
    <source>
        <dbReference type="HAMAP-Rule" id="MF_01124"/>
    </source>
</evidence>
<keyword id="KW-1185">Reference proteome</keyword>
<proteinExistence type="inferred from homology"/>
<protein>
    <recommendedName>
        <fullName evidence="1">Adapter protein MecA</fullName>
    </recommendedName>
</protein>
<organism>
    <name type="scientific">Latilactobacillus sakei subsp. sakei (strain 23K)</name>
    <name type="common">Lactobacillus sakei subsp. sakei</name>
    <dbReference type="NCBI Taxonomy" id="314315"/>
    <lineage>
        <taxon>Bacteria</taxon>
        <taxon>Bacillati</taxon>
        <taxon>Bacillota</taxon>
        <taxon>Bacilli</taxon>
        <taxon>Lactobacillales</taxon>
        <taxon>Lactobacillaceae</taxon>
        <taxon>Latilactobacillus</taxon>
    </lineage>
</organism>
<reference key="1">
    <citation type="journal article" date="2005" name="Nat. Biotechnol.">
        <title>The complete genome sequence of the meat-borne lactic acid bacterium Lactobacillus sakei 23K.</title>
        <authorList>
            <person name="Chaillou S."/>
            <person name="Champomier-Verges M.-C."/>
            <person name="Cornet M."/>
            <person name="Crutz-Le Coq A.-M."/>
            <person name="Dudez A.-M."/>
            <person name="Martin V."/>
            <person name="Beaufils S."/>
            <person name="Darbon-Rongere E."/>
            <person name="Bossy R."/>
            <person name="Loux V."/>
            <person name="Zagorec M."/>
        </authorList>
    </citation>
    <scope>NUCLEOTIDE SEQUENCE [LARGE SCALE GENOMIC DNA]</scope>
    <source>
        <strain>23K</strain>
    </source>
</reference>
<name>MECA_LATSS</name>
<feature type="chain" id="PRO_1000065341" description="Adapter protein MecA">
    <location>
        <begin position="1"/>
        <end position="229"/>
    </location>
</feature>
<gene>
    <name evidence="1" type="primary">mecA</name>
    <name type="ordered locus">LCA_1448</name>
</gene>
<dbReference type="EMBL" id="CR936503">
    <property type="protein sequence ID" value="CAI55750.1"/>
    <property type="molecule type" value="Genomic_DNA"/>
</dbReference>
<dbReference type="RefSeq" id="WP_011375140.1">
    <property type="nucleotide sequence ID" value="NC_007576.1"/>
</dbReference>
<dbReference type="SMR" id="Q38VN3"/>
<dbReference type="STRING" id="314315.LCA_1448"/>
<dbReference type="KEGG" id="lsa:LCA_1448"/>
<dbReference type="eggNOG" id="COG4862">
    <property type="taxonomic scope" value="Bacteria"/>
</dbReference>
<dbReference type="HOGENOM" id="CLU_071496_2_0_9"/>
<dbReference type="OrthoDB" id="2360201at2"/>
<dbReference type="Proteomes" id="UP000002707">
    <property type="component" value="Chromosome"/>
</dbReference>
<dbReference type="GO" id="GO:0030674">
    <property type="term" value="F:protein-macromolecule adaptor activity"/>
    <property type="evidence" value="ECO:0007669"/>
    <property type="project" value="UniProtKB-UniRule"/>
</dbReference>
<dbReference type="Gene3D" id="3.30.70.1950">
    <property type="match status" value="1"/>
</dbReference>
<dbReference type="HAMAP" id="MF_01124">
    <property type="entry name" value="MecA"/>
    <property type="match status" value="1"/>
</dbReference>
<dbReference type="InterPro" id="IPR038471">
    <property type="entry name" value="MecA_C_sf"/>
</dbReference>
<dbReference type="InterPro" id="IPR008681">
    <property type="entry name" value="Neg-reg_MecA"/>
</dbReference>
<dbReference type="PANTHER" id="PTHR39161">
    <property type="entry name" value="ADAPTER PROTEIN MECA"/>
    <property type="match status" value="1"/>
</dbReference>
<dbReference type="PANTHER" id="PTHR39161:SF1">
    <property type="entry name" value="ADAPTER PROTEIN MECA 1"/>
    <property type="match status" value="1"/>
</dbReference>
<dbReference type="Pfam" id="PF05389">
    <property type="entry name" value="MecA"/>
    <property type="match status" value="1"/>
</dbReference>
<dbReference type="PIRSF" id="PIRSF029008">
    <property type="entry name" value="MecA"/>
    <property type="match status" value="1"/>
</dbReference>